<organism>
    <name type="scientific">Acetabularia acetabulum</name>
    <name type="common">Mermaid's wine glass</name>
    <name type="synonym">Acetabularia mediterranea</name>
    <dbReference type="NCBI Taxonomy" id="35845"/>
    <lineage>
        <taxon>Eukaryota</taxon>
        <taxon>Viridiplantae</taxon>
        <taxon>Chlorophyta</taxon>
        <taxon>Ulvophyceae</taxon>
        <taxon>TCBD clade</taxon>
        <taxon>Dasycladales</taxon>
        <taxon>Polyphysaceae</taxon>
        <taxon>Acetabularia</taxon>
    </lineage>
</organism>
<feature type="transit peptide" description="Chloroplast" evidence="1">
    <location>
        <begin position="1"/>
        <end position="41"/>
    </location>
</feature>
<feature type="chain" id="PRO_0000031456" description="Ribulose bisphosphate carboxylase small subunit, chloroplastic 3" evidence="1">
    <location>
        <begin position="42"/>
        <end position="182"/>
    </location>
</feature>
<keyword id="KW-0113">Calvin cycle</keyword>
<keyword id="KW-0120">Carbon dioxide fixation</keyword>
<keyword id="KW-0150">Chloroplast</keyword>
<keyword id="KW-0601">Photorespiration</keyword>
<keyword id="KW-0602">Photosynthesis</keyword>
<keyword id="KW-0934">Plastid</keyword>
<keyword id="KW-0809">Transit peptide</keyword>
<comment type="function">
    <text evidence="1">RuBisCO catalyzes two reactions: the carboxylation of D-ribulose 1,5-bisphosphate, the primary event in carbon dioxide fixation, as well as the oxidative fragmentation of the pentose substrate. Both reactions occur simultaneously and in competition at the same active site. Although the small subunit is not catalytic it is essential for maximal activity.</text>
</comment>
<comment type="subunit">
    <text evidence="1">Heterohexadecamer of 8 large and 8 small subunits.</text>
</comment>
<comment type="subcellular location">
    <subcellularLocation>
        <location evidence="1">Plastid</location>
        <location evidence="1">Chloroplast</location>
    </subcellularLocation>
</comment>
<comment type="miscellaneous">
    <text evidence="1">The basic functional RuBisCO is composed of a large chain homodimer in a 'head-to-tail' conformation. In form I RuBisCO this homodimer is arranged in a barrel-like tetramer with the small subunits forming a tetrameric 'cap' on each end of the 'barrel'.</text>
</comment>
<comment type="similarity">
    <text evidence="1">Belongs to the RuBisCO small chain family.</text>
</comment>
<accession>P16136</accession>
<name>RBS3_ACEAT</name>
<reference key="1">
    <citation type="journal article" date="1989" name="Mol. Gen. Genet.">
        <title>Strong homology between the small subunit of ribulose-1,5-bisphosphate carboxylase/oxygenase of two species of Acetabularia and the occurrence of unusual codon usage.</title>
        <authorList>
            <person name="Schneider S.U."/>
            <person name="Leible M.B."/>
            <person name="Yang X.P."/>
        </authorList>
    </citation>
    <scope>NUCLEOTIDE SEQUENCE [MRNA]</scope>
    <source>
        <strain>17</strain>
    </source>
</reference>
<evidence type="ECO:0000255" key="1">
    <source>
        <dbReference type="HAMAP-Rule" id="MF_00860"/>
    </source>
</evidence>
<proteinExistence type="evidence at transcript level"/>
<gene>
    <name evidence="1" type="primary">RBCS3</name>
    <name type="synonym">RBCS-3</name>
</gene>
<dbReference type="EMBL" id="X51813">
    <property type="protein sequence ID" value="CAA36110.1"/>
    <property type="molecule type" value="mRNA"/>
</dbReference>
<dbReference type="PIR" id="S07117">
    <property type="entry name" value="RKJK3M"/>
</dbReference>
<dbReference type="SMR" id="P16136"/>
<dbReference type="GO" id="GO:0009507">
    <property type="term" value="C:chloroplast"/>
    <property type="evidence" value="ECO:0007669"/>
    <property type="project" value="UniProtKB-SubCell"/>
</dbReference>
<dbReference type="GO" id="GO:0016984">
    <property type="term" value="F:ribulose-bisphosphate carboxylase activity"/>
    <property type="evidence" value="ECO:0007669"/>
    <property type="project" value="UniProtKB-UniRule"/>
</dbReference>
<dbReference type="GO" id="GO:0009853">
    <property type="term" value="P:photorespiration"/>
    <property type="evidence" value="ECO:0007669"/>
    <property type="project" value="UniProtKB-KW"/>
</dbReference>
<dbReference type="GO" id="GO:0019253">
    <property type="term" value="P:reductive pentose-phosphate cycle"/>
    <property type="evidence" value="ECO:0007669"/>
    <property type="project" value="UniProtKB-UniRule"/>
</dbReference>
<dbReference type="CDD" id="cd03527">
    <property type="entry name" value="RuBisCO_small"/>
    <property type="match status" value="1"/>
</dbReference>
<dbReference type="FunFam" id="3.30.190.10:FF:000001">
    <property type="entry name" value="Ribulose bisphosphate carboxylase small chain, chloroplastic"/>
    <property type="match status" value="1"/>
</dbReference>
<dbReference type="Gene3D" id="3.30.190.10">
    <property type="entry name" value="Ribulose bisphosphate carboxylase, small subunit"/>
    <property type="match status" value="1"/>
</dbReference>
<dbReference type="HAMAP" id="MF_00859">
    <property type="entry name" value="RuBisCO_S_bact"/>
    <property type="match status" value="1"/>
</dbReference>
<dbReference type="InterPro" id="IPR024681">
    <property type="entry name" value="RuBisCO_ssu"/>
</dbReference>
<dbReference type="InterPro" id="IPR000894">
    <property type="entry name" value="RuBisCO_ssu_dom"/>
</dbReference>
<dbReference type="InterPro" id="IPR036385">
    <property type="entry name" value="RuBisCO_ssu_sf"/>
</dbReference>
<dbReference type="PANTHER" id="PTHR31262">
    <property type="entry name" value="RIBULOSE BISPHOSPHATE CARBOXYLASE SMALL CHAIN 1, CHLOROPLASTIC"/>
    <property type="match status" value="1"/>
</dbReference>
<dbReference type="PANTHER" id="PTHR31262:SF0">
    <property type="entry name" value="RIBULOSE BISPHOSPHATE CARBOXYLASE SMALL SUBUNIT, CHLOROPLASTIC 1"/>
    <property type="match status" value="1"/>
</dbReference>
<dbReference type="Pfam" id="PF00101">
    <property type="entry name" value="RuBisCO_small"/>
    <property type="match status" value="1"/>
</dbReference>
<dbReference type="PRINTS" id="PR00152">
    <property type="entry name" value="RUBISCOSMALL"/>
</dbReference>
<dbReference type="SMART" id="SM00961">
    <property type="entry name" value="RuBisCO_small"/>
    <property type="match status" value="1"/>
</dbReference>
<dbReference type="SUPFAM" id="SSF55239">
    <property type="entry name" value="RuBisCO, small subunit"/>
    <property type="match status" value="1"/>
</dbReference>
<sequence>MASIMMNKSVVLSKECAKPLASPKVTLNKRGFATTIATKNRGMMVWQPFNNKMFETFSFLPPLTDEQISKQVDYILINSWTPCLEFAASDQAYAGNENCIRMGPVASTYQDNRYWTMWKLPMFGCTDASQVLSEIQACTKAFPDAYIRLVCFDANRQVQISGFLVHRPPSATDYKLPADRQV</sequence>
<protein>
    <recommendedName>
        <fullName evidence="1">Ribulose bisphosphate carboxylase small subunit, chloroplastic 3</fullName>
        <shortName evidence="1">RuBisCO small subunit 3</shortName>
    </recommendedName>
</protein>